<reference key="1">
    <citation type="journal article" date="2004" name="Nat. Biotechnol.">
        <title>Complete sequence and comparative genome analysis of the dairy bacterium Streptococcus thermophilus.</title>
        <authorList>
            <person name="Bolotin A."/>
            <person name="Quinquis B."/>
            <person name="Renault P."/>
            <person name="Sorokin A."/>
            <person name="Ehrlich S.D."/>
            <person name="Kulakauskas S."/>
            <person name="Lapidus A."/>
            <person name="Goltsman E."/>
            <person name="Mazur M."/>
            <person name="Pusch G.D."/>
            <person name="Fonstein M."/>
            <person name="Overbeek R."/>
            <person name="Kyprides N."/>
            <person name="Purnelle B."/>
            <person name="Prozzi D."/>
            <person name="Ngui K."/>
            <person name="Masuy D."/>
            <person name="Hancy F."/>
            <person name="Burteau S."/>
            <person name="Boutry M."/>
            <person name="Delcour J."/>
            <person name="Goffeau A."/>
            <person name="Hols P."/>
        </authorList>
    </citation>
    <scope>NUCLEOTIDE SEQUENCE [LARGE SCALE GENOMIC DNA]</scope>
    <source>
        <strain>CNRZ 1066</strain>
    </source>
</reference>
<name>MURC_STRT1</name>
<organism>
    <name type="scientific">Streptococcus thermophilus (strain CNRZ 1066)</name>
    <dbReference type="NCBI Taxonomy" id="299768"/>
    <lineage>
        <taxon>Bacteria</taxon>
        <taxon>Bacillati</taxon>
        <taxon>Bacillota</taxon>
        <taxon>Bacilli</taxon>
        <taxon>Lactobacillales</taxon>
        <taxon>Streptococcaceae</taxon>
        <taxon>Streptococcus</taxon>
    </lineage>
</organism>
<sequence length="447" mass="50164">MQGETMSKTYHFIGIKGSGMSALALMLHQMGHKVQGSDVEKYYFTQRGLEQAGIPILPFDEKNITEDVELIAGNAFREDNNVEIAYAIKNGYKFKRYHEFLGHFMNQFTSFGVAGAHGKTSTTGLLSHSMKNITDTSYLIGDGTGRGSANAQYFVFEADEYERHFMPYHPAYSIITNIDFDHPDYFTSIDDVFSAFDDYAKQVQKGLFVYGEDSNLRKITSNAPIYYYGFEENDDFMATDIIRTTTGSNFKVKHDGQIIGEFHVPAYGRHNILNATAVIANLYVAGFDMALVAEHLKTFSGVKRRFTEKIISDTVIIDDFAHHPTEIIATLDAARQKYPSKEIVAIFQPHTFTRTIALLDDFAEALNEADAVYLAQIYGSAREVDHGDVKVEDLAAKINKPAKVVTVENVSPLLDHDNAIYVFMGAGDIQLYERSFEELLASLQTHM</sequence>
<evidence type="ECO:0000255" key="1">
    <source>
        <dbReference type="HAMAP-Rule" id="MF_00046"/>
    </source>
</evidence>
<dbReference type="EC" id="6.3.2.8" evidence="1"/>
<dbReference type="EMBL" id="CP000024">
    <property type="protein sequence ID" value="AAV61853.1"/>
    <property type="molecule type" value="Genomic_DNA"/>
</dbReference>
<dbReference type="SMR" id="Q5M1J9"/>
<dbReference type="KEGG" id="stc:str0239"/>
<dbReference type="HOGENOM" id="CLU_028104_1_0_9"/>
<dbReference type="UniPathway" id="UPA00219"/>
<dbReference type="GO" id="GO:0005737">
    <property type="term" value="C:cytoplasm"/>
    <property type="evidence" value="ECO:0007669"/>
    <property type="project" value="UniProtKB-SubCell"/>
</dbReference>
<dbReference type="GO" id="GO:0005524">
    <property type="term" value="F:ATP binding"/>
    <property type="evidence" value="ECO:0007669"/>
    <property type="project" value="UniProtKB-UniRule"/>
</dbReference>
<dbReference type="GO" id="GO:0008763">
    <property type="term" value="F:UDP-N-acetylmuramate-L-alanine ligase activity"/>
    <property type="evidence" value="ECO:0007669"/>
    <property type="project" value="UniProtKB-UniRule"/>
</dbReference>
<dbReference type="GO" id="GO:0051301">
    <property type="term" value="P:cell division"/>
    <property type="evidence" value="ECO:0007669"/>
    <property type="project" value="UniProtKB-KW"/>
</dbReference>
<dbReference type="GO" id="GO:0071555">
    <property type="term" value="P:cell wall organization"/>
    <property type="evidence" value="ECO:0007669"/>
    <property type="project" value="UniProtKB-KW"/>
</dbReference>
<dbReference type="GO" id="GO:0009252">
    <property type="term" value="P:peptidoglycan biosynthetic process"/>
    <property type="evidence" value="ECO:0007669"/>
    <property type="project" value="UniProtKB-UniRule"/>
</dbReference>
<dbReference type="GO" id="GO:0008360">
    <property type="term" value="P:regulation of cell shape"/>
    <property type="evidence" value="ECO:0007669"/>
    <property type="project" value="UniProtKB-KW"/>
</dbReference>
<dbReference type="Gene3D" id="3.90.190.20">
    <property type="entry name" value="Mur ligase, C-terminal domain"/>
    <property type="match status" value="1"/>
</dbReference>
<dbReference type="Gene3D" id="3.40.1190.10">
    <property type="entry name" value="Mur-like, catalytic domain"/>
    <property type="match status" value="1"/>
</dbReference>
<dbReference type="Gene3D" id="3.40.50.720">
    <property type="entry name" value="NAD(P)-binding Rossmann-like Domain"/>
    <property type="match status" value="1"/>
</dbReference>
<dbReference type="HAMAP" id="MF_00046">
    <property type="entry name" value="MurC"/>
    <property type="match status" value="1"/>
</dbReference>
<dbReference type="InterPro" id="IPR036565">
    <property type="entry name" value="Mur-like_cat_sf"/>
</dbReference>
<dbReference type="InterPro" id="IPR004101">
    <property type="entry name" value="Mur_ligase_C"/>
</dbReference>
<dbReference type="InterPro" id="IPR036615">
    <property type="entry name" value="Mur_ligase_C_dom_sf"/>
</dbReference>
<dbReference type="InterPro" id="IPR013221">
    <property type="entry name" value="Mur_ligase_cen"/>
</dbReference>
<dbReference type="InterPro" id="IPR000713">
    <property type="entry name" value="Mur_ligase_N"/>
</dbReference>
<dbReference type="InterPro" id="IPR050061">
    <property type="entry name" value="MurCDEF_pg_biosynth"/>
</dbReference>
<dbReference type="InterPro" id="IPR005758">
    <property type="entry name" value="UDP-N-AcMur_Ala_ligase_MurC"/>
</dbReference>
<dbReference type="NCBIfam" id="TIGR01082">
    <property type="entry name" value="murC"/>
    <property type="match status" value="1"/>
</dbReference>
<dbReference type="PANTHER" id="PTHR43445:SF3">
    <property type="entry name" value="UDP-N-ACETYLMURAMATE--L-ALANINE LIGASE"/>
    <property type="match status" value="1"/>
</dbReference>
<dbReference type="PANTHER" id="PTHR43445">
    <property type="entry name" value="UDP-N-ACETYLMURAMATE--L-ALANINE LIGASE-RELATED"/>
    <property type="match status" value="1"/>
</dbReference>
<dbReference type="Pfam" id="PF01225">
    <property type="entry name" value="Mur_ligase"/>
    <property type="match status" value="1"/>
</dbReference>
<dbReference type="Pfam" id="PF02875">
    <property type="entry name" value="Mur_ligase_C"/>
    <property type="match status" value="1"/>
</dbReference>
<dbReference type="Pfam" id="PF08245">
    <property type="entry name" value="Mur_ligase_M"/>
    <property type="match status" value="1"/>
</dbReference>
<dbReference type="SUPFAM" id="SSF51984">
    <property type="entry name" value="MurCD N-terminal domain"/>
    <property type="match status" value="1"/>
</dbReference>
<dbReference type="SUPFAM" id="SSF53623">
    <property type="entry name" value="MurD-like peptide ligases, catalytic domain"/>
    <property type="match status" value="1"/>
</dbReference>
<dbReference type="SUPFAM" id="SSF53244">
    <property type="entry name" value="MurD-like peptide ligases, peptide-binding domain"/>
    <property type="match status" value="1"/>
</dbReference>
<comment type="function">
    <text evidence="1">Cell wall formation.</text>
</comment>
<comment type="catalytic activity">
    <reaction evidence="1">
        <text>UDP-N-acetyl-alpha-D-muramate + L-alanine + ATP = UDP-N-acetyl-alpha-D-muramoyl-L-alanine + ADP + phosphate + H(+)</text>
        <dbReference type="Rhea" id="RHEA:23372"/>
        <dbReference type="ChEBI" id="CHEBI:15378"/>
        <dbReference type="ChEBI" id="CHEBI:30616"/>
        <dbReference type="ChEBI" id="CHEBI:43474"/>
        <dbReference type="ChEBI" id="CHEBI:57972"/>
        <dbReference type="ChEBI" id="CHEBI:70757"/>
        <dbReference type="ChEBI" id="CHEBI:83898"/>
        <dbReference type="ChEBI" id="CHEBI:456216"/>
        <dbReference type="EC" id="6.3.2.8"/>
    </reaction>
</comment>
<comment type="pathway">
    <text evidence="1">Cell wall biogenesis; peptidoglycan biosynthesis.</text>
</comment>
<comment type="subcellular location">
    <subcellularLocation>
        <location evidence="1">Cytoplasm</location>
    </subcellularLocation>
</comment>
<comment type="similarity">
    <text evidence="1">Belongs to the MurCDEF family.</text>
</comment>
<gene>
    <name evidence="1" type="primary">murC</name>
    <name type="ordered locus">str0239</name>
</gene>
<keyword id="KW-0067">ATP-binding</keyword>
<keyword id="KW-0131">Cell cycle</keyword>
<keyword id="KW-0132">Cell division</keyword>
<keyword id="KW-0133">Cell shape</keyword>
<keyword id="KW-0961">Cell wall biogenesis/degradation</keyword>
<keyword id="KW-0963">Cytoplasm</keyword>
<keyword id="KW-0436">Ligase</keyword>
<keyword id="KW-0547">Nucleotide-binding</keyword>
<keyword id="KW-0573">Peptidoglycan synthesis</keyword>
<protein>
    <recommendedName>
        <fullName evidence="1">UDP-N-acetylmuramate--L-alanine ligase</fullName>
        <ecNumber evidence="1">6.3.2.8</ecNumber>
    </recommendedName>
    <alternativeName>
        <fullName evidence="1">UDP-N-acetylmuramoyl-L-alanine synthetase</fullName>
    </alternativeName>
</protein>
<feature type="chain" id="PRO_0000242604" description="UDP-N-acetylmuramate--L-alanine ligase">
    <location>
        <begin position="1"/>
        <end position="447"/>
    </location>
</feature>
<feature type="binding site" evidence="1">
    <location>
        <begin position="115"/>
        <end position="121"/>
    </location>
    <ligand>
        <name>ATP</name>
        <dbReference type="ChEBI" id="CHEBI:30616"/>
    </ligand>
</feature>
<proteinExistence type="inferred from homology"/>
<accession>Q5M1J9</accession>